<feature type="chain" id="PRO_1000069880" description="Fe/S biogenesis protein NfuA">
    <location>
        <begin position="1"/>
        <end position="191"/>
    </location>
</feature>
<feature type="binding site" evidence="1">
    <location>
        <position position="149"/>
    </location>
    <ligand>
        <name>[4Fe-4S] cluster</name>
        <dbReference type="ChEBI" id="CHEBI:49883"/>
    </ligand>
</feature>
<feature type="binding site" evidence="1">
    <location>
        <position position="152"/>
    </location>
    <ligand>
        <name>[4Fe-4S] cluster</name>
        <dbReference type="ChEBI" id="CHEBI:49883"/>
    </ligand>
</feature>
<sequence>MITITDAAQSHFAKLLANQEEGTQIRVFVINPGTPTAECGVSYCPPDAVEATDTELKFEQLSAYVDELSVPYLQDAEIDFVTDQLGSQLTLKAPNAKMRKVDDSAPLMERVEYVLQSQINPQLAGHGGRVTLMEITPEGLAILQFGGGCNGCSMVDVTLKEGIEKELLQKFPELKGVRDLTEHQRGEHSYY</sequence>
<proteinExistence type="inferred from homology"/>
<protein>
    <recommendedName>
        <fullName evidence="1">Fe/S biogenesis protein NfuA</fullName>
    </recommendedName>
</protein>
<organism>
    <name type="scientific">Yersinia pestis (strain Pestoides F)</name>
    <dbReference type="NCBI Taxonomy" id="386656"/>
    <lineage>
        <taxon>Bacteria</taxon>
        <taxon>Pseudomonadati</taxon>
        <taxon>Pseudomonadota</taxon>
        <taxon>Gammaproteobacteria</taxon>
        <taxon>Enterobacterales</taxon>
        <taxon>Yersiniaceae</taxon>
        <taxon>Yersinia</taxon>
    </lineage>
</organism>
<comment type="function">
    <text evidence="1">Involved in iron-sulfur cluster biogenesis. Binds a 4Fe-4S cluster, can transfer this cluster to apoproteins, and thereby intervenes in the maturation of Fe/S proteins. Could also act as a scaffold/chaperone for damaged Fe/S proteins.</text>
</comment>
<comment type="cofactor">
    <cofactor evidence="1">
        <name>[4Fe-4S] cluster</name>
        <dbReference type="ChEBI" id="CHEBI:49883"/>
    </cofactor>
    <text evidence="1">Binds 1 [4Fe-4S] cluster per subunit. The cluster is presumably bound at the interface of two monomers.</text>
</comment>
<comment type="subunit">
    <text evidence="1">Homodimer.</text>
</comment>
<comment type="similarity">
    <text evidence="1">Belongs to the NfuA family.</text>
</comment>
<reference key="1">
    <citation type="submission" date="2007-02" db="EMBL/GenBank/DDBJ databases">
        <title>Complete sequence of chromosome of Yersinia pestis Pestoides F.</title>
        <authorList>
            <consortium name="US DOE Joint Genome Institute"/>
            <person name="Copeland A."/>
            <person name="Lucas S."/>
            <person name="Lapidus A."/>
            <person name="Barry K."/>
            <person name="Detter J.C."/>
            <person name="Glavina del Rio T."/>
            <person name="Hammon N."/>
            <person name="Israni S."/>
            <person name="Dalin E."/>
            <person name="Tice H."/>
            <person name="Pitluck S."/>
            <person name="Di Bartolo G."/>
            <person name="Chain P."/>
            <person name="Malfatti S."/>
            <person name="Shin M."/>
            <person name="Vergez L."/>
            <person name="Schmutz J."/>
            <person name="Larimer F."/>
            <person name="Land M."/>
            <person name="Hauser L."/>
            <person name="Worsham P."/>
            <person name="Chu M."/>
            <person name="Bearden S."/>
            <person name="Garcia E."/>
            <person name="Richardson P."/>
        </authorList>
    </citation>
    <scope>NUCLEOTIDE SEQUENCE [LARGE SCALE GENOMIC DNA]</scope>
    <source>
        <strain>Pestoides F</strain>
    </source>
</reference>
<accession>A4TGR7</accession>
<keyword id="KW-0004">4Fe-4S</keyword>
<keyword id="KW-0408">Iron</keyword>
<keyword id="KW-0411">Iron-sulfur</keyword>
<keyword id="KW-0479">Metal-binding</keyword>
<name>NFUA_YERPP</name>
<evidence type="ECO:0000255" key="1">
    <source>
        <dbReference type="HAMAP-Rule" id="MF_01637"/>
    </source>
</evidence>
<dbReference type="EMBL" id="CP000668">
    <property type="protein sequence ID" value="ABP38480.1"/>
    <property type="molecule type" value="Genomic_DNA"/>
</dbReference>
<dbReference type="RefSeq" id="WP_002208924.1">
    <property type="nucleotide sequence ID" value="NZ_CP009715.1"/>
</dbReference>
<dbReference type="SMR" id="A4TGR7"/>
<dbReference type="GeneID" id="57974473"/>
<dbReference type="KEGG" id="ypp:YPDSF_0054"/>
<dbReference type="PATRIC" id="fig|386656.14.peg.516"/>
<dbReference type="GO" id="GO:0051539">
    <property type="term" value="F:4 iron, 4 sulfur cluster binding"/>
    <property type="evidence" value="ECO:0007669"/>
    <property type="project" value="UniProtKB-UniRule"/>
</dbReference>
<dbReference type="GO" id="GO:0005506">
    <property type="term" value="F:iron ion binding"/>
    <property type="evidence" value="ECO:0007669"/>
    <property type="project" value="InterPro"/>
</dbReference>
<dbReference type="GO" id="GO:0016226">
    <property type="term" value="P:iron-sulfur cluster assembly"/>
    <property type="evidence" value="ECO:0007669"/>
    <property type="project" value="UniProtKB-UniRule"/>
</dbReference>
<dbReference type="GO" id="GO:0051604">
    <property type="term" value="P:protein maturation"/>
    <property type="evidence" value="ECO:0007669"/>
    <property type="project" value="UniProtKB-UniRule"/>
</dbReference>
<dbReference type="Gene3D" id="3.30.300.130">
    <property type="entry name" value="Fe-S cluster assembly (FSCA)"/>
    <property type="match status" value="1"/>
</dbReference>
<dbReference type="Gene3D" id="2.60.300.12">
    <property type="entry name" value="HesB-like domain"/>
    <property type="match status" value="1"/>
</dbReference>
<dbReference type="HAMAP" id="MF_01637">
    <property type="entry name" value="Fe_S_biogen_NfuA"/>
    <property type="match status" value="1"/>
</dbReference>
<dbReference type="InterPro" id="IPR017726">
    <property type="entry name" value="Fe/S_biogenesis_protein_NfuA"/>
</dbReference>
<dbReference type="InterPro" id="IPR000361">
    <property type="entry name" value="FeS_biogenesis"/>
</dbReference>
<dbReference type="InterPro" id="IPR034904">
    <property type="entry name" value="FSCA_dom_sf"/>
</dbReference>
<dbReference type="InterPro" id="IPR035903">
    <property type="entry name" value="HesB-like_dom_sf"/>
</dbReference>
<dbReference type="InterPro" id="IPR001075">
    <property type="entry name" value="NIF_FeS_clus_asmbl_NifU_C"/>
</dbReference>
<dbReference type="NCBIfam" id="NF008392">
    <property type="entry name" value="PRK11190.1"/>
    <property type="match status" value="1"/>
</dbReference>
<dbReference type="NCBIfam" id="TIGR03341">
    <property type="entry name" value="YhgI_GntY"/>
    <property type="match status" value="1"/>
</dbReference>
<dbReference type="PANTHER" id="PTHR11178:SF51">
    <property type="entry name" value="FE_S BIOGENESIS PROTEIN NFUA"/>
    <property type="match status" value="1"/>
</dbReference>
<dbReference type="PANTHER" id="PTHR11178">
    <property type="entry name" value="IRON-SULFUR CLUSTER SCAFFOLD PROTEIN NFU-RELATED"/>
    <property type="match status" value="1"/>
</dbReference>
<dbReference type="Pfam" id="PF01521">
    <property type="entry name" value="Fe-S_biosyn"/>
    <property type="match status" value="1"/>
</dbReference>
<dbReference type="Pfam" id="PF01106">
    <property type="entry name" value="NifU"/>
    <property type="match status" value="1"/>
</dbReference>
<dbReference type="SUPFAM" id="SSF117916">
    <property type="entry name" value="Fe-S cluster assembly (FSCA) domain-like"/>
    <property type="match status" value="1"/>
</dbReference>
<dbReference type="SUPFAM" id="SSF89360">
    <property type="entry name" value="HesB-like domain"/>
    <property type="match status" value="1"/>
</dbReference>
<gene>
    <name evidence="1" type="primary">nfuA</name>
    <name type="ordered locus">YPDSF_0054</name>
</gene>